<comment type="similarity">
    <text evidence="2">Belongs to the PhzF family.</text>
</comment>
<gene>
    <name type="ordered locus">BH0283</name>
</gene>
<sequence>MMTTPIYVVDAFTNQAFKGNPAAVCVLPTSRDDIWMQHVASEMNLSETAFLHPYQDGYSLRWFTPNTEVDLCGHATLASAHILWELDHISAEQPITFYTKSGILTASKRGEWIELDFPSEQPKQENVYPNELIDGLGIQPLYVGRNRFDYLIEIDSEQRLKELNPNFSLLEQIDTRGIIVTSKSTSTEYDFISRCFFPAVGVNEDPVTGSAHCCLGPYWQEKLNKNEFLAYQASKRGGMLKIKLQHDRVFLLGQAVTVLRSELLL</sequence>
<name>Y283_HALH5</name>
<reference key="1">
    <citation type="journal article" date="2000" name="Nucleic Acids Res.">
        <title>Complete genome sequence of the alkaliphilic bacterium Bacillus halodurans and genomic sequence comparison with Bacillus subtilis.</title>
        <authorList>
            <person name="Takami H."/>
            <person name="Nakasone K."/>
            <person name="Takaki Y."/>
            <person name="Maeno G."/>
            <person name="Sasaki R."/>
            <person name="Masui N."/>
            <person name="Fuji F."/>
            <person name="Hirama C."/>
            <person name="Nakamura Y."/>
            <person name="Ogasawara N."/>
            <person name="Kuhara S."/>
            <person name="Horikoshi K."/>
        </authorList>
    </citation>
    <scope>NUCLEOTIDE SEQUENCE [LARGE SCALE GENOMIC DNA]</scope>
    <source>
        <strain>ATCC BAA-125 / DSM 18197 / FERM 7344 / JCM 9153 / C-125</strain>
    </source>
</reference>
<evidence type="ECO:0000250" key="1"/>
<evidence type="ECO:0000305" key="2"/>
<dbReference type="EC" id="5.1.-.-"/>
<dbReference type="EMBL" id="BA000004">
    <property type="protein sequence ID" value="BAB04002.1"/>
    <property type="molecule type" value="Genomic_DNA"/>
</dbReference>
<dbReference type="PIR" id="C83685">
    <property type="entry name" value="C83685"/>
</dbReference>
<dbReference type="RefSeq" id="WP_010896464.1">
    <property type="nucleotide sequence ID" value="NC_002570.2"/>
</dbReference>
<dbReference type="SMR" id="Q9KG32"/>
<dbReference type="KEGG" id="bha:BH0283"/>
<dbReference type="eggNOG" id="COG0384">
    <property type="taxonomic scope" value="Bacteria"/>
</dbReference>
<dbReference type="HOGENOM" id="CLU_048756_2_1_9"/>
<dbReference type="OrthoDB" id="9788221at2"/>
<dbReference type="Proteomes" id="UP000001258">
    <property type="component" value="Chromosome"/>
</dbReference>
<dbReference type="GO" id="GO:0005737">
    <property type="term" value="C:cytoplasm"/>
    <property type="evidence" value="ECO:0007669"/>
    <property type="project" value="TreeGrafter"/>
</dbReference>
<dbReference type="GO" id="GO:0016853">
    <property type="term" value="F:isomerase activity"/>
    <property type="evidence" value="ECO:0007669"/>
    <property type="project" value="UniProtKB-KW"/>
</dbReference>
<dbReference type="GO" id="GO:0009058">
    <property type="term" value="P:biosynthetic process"/>
    <property type="evidence" value="ECO:0007669"/>
    <property type="project" value="InterPro"/>
</dbReference>
<dbReference type="Gene3D" id="3.10.310.10">
    <property type="entry name" value="Diaminopimelate Epimerase, Chain A, domain 1"/>
    <property type="match status" value="2"/>
</dbReference>
<dbReference type="InterPro" id="IPR003719">
    <property type="entry name" value="Phenazine_PhzF-like"/>
</dbReference>
<dbReference type="NCBIfam" id="TIGR00654">
    <property type="entry name" value="PhzF_family"/>
    <property type="match status" value="1"/>
</dbReference>
<dbReference type="PANTHER" id="PTHR13774">
    <property type="entry name" value="PHENAZINE BIOSYNTHESIS PROTEIN"/>
    <property type="match status" value="1"/>
</dbReference>
<dbReference type="PANTHER" id="PTHR13774:SF17">
    <property type="entry name" value="PHENAZINE BIOSYNTHESIS-LIKE DOMAIN-CONTAINING PROTEIN"/>
    <property type="match status" value="1"/>
</dbReference>
<dbReference type="Pfam" id="PF02567">
    <property type="entry name" value="PhzC-PhzF"/>
    <property type="match status" value="1"/>
</dbReference>
<dbReference type="PIRSF" id="PIRSF016184">
    <property type="entry name" value="PhzC_PhzF"/>
    <property type="match status" value="1"/>
</dbReference>
<dbReference type="SUPFAM" id="SSF54506">
    <property type="entry name" value="Diaminopimelate epimerase-like"/>
    <property type="match status" value="1"/>
</dbReference>
<proteinExistence type="inferred from homology"/>
<keyword id="KW-0413">Isomerase</keyword>
<keyword id="KW-1185">Reference proteome</keyword>
<accession>Q9KG32</accession>
<protein>
    <recommendedName>
        <fullName>Uncharacterized isomerase BH0283</fullName>
        <ecNumber>5.1.-.-</ecNumber>
    </recommendedName>
</protein>
<feature type="chain" id="PRO_0000162391" description="Uncharacterized isomerase BH0283">
    <location>
        <begin position="1"/>
        <end position="265"/>
    </location>
</feature>
<feature type="active site" evidence="1">
    <location>
        <position position="47"/>
    </location>
</feature>
<organism>
    <name type="scientific">Halalkalibacterium halodurans (strain ATCC BAA-125 / DSM 18197 / FERM 7344 / JCM 9153 / C-125)</name>
    <name type="common">Bacillus halodurans</name>
    <dbReference type="NCBI Taxonomy" id="272558"/>
    <lineage>
        <taxon>Bacteria</taxon>
        <taxon>Bacillati</taxon>
        <taxon>Bacillota</taxon>
        <taxon>Bacilli</taxon>
        <taxon>Bacillales</taxon>
        <taxon>Bacillaceae</taxon>
        <taxon>Halalkalibacterium (ex Joshi et al. 2022)</taxon>
    </lineage>
</organism>